<protein>
    <recommendedName>
        <fullName evidence="1">ATP synthase subunit b, chloroplastic</fullName>
    </recommendedName>
    <alternativeName>
        <fullName evidence="1">ATP synthase F(0) sector subunit b</fullName>
    </alternativeName>
    <alternativeName>
        <fullName evidence="1">ATPase subunit I</fullName>
    </alternativeName>
</protein>
<geneLocation type="chloroplast"/>
<organism>
    <name type="scientific">Carica papaya</name>
    <name type="common">Papaya</name>
    <dbReference type="NCBI Taxonomy" id="3649"/>
    <lineage>
        <taxon>Eukaryota</taxon>
        <taxon>Viridiplantae</taxon>
        <taxon>Streptophyta</taxon>
        <taxon>Embryophyta</taxon>
        <taxon>Tracheophyta</taxon>
        <taxon>Spermatophyta</taxon>
        <taxon>Magnoliopsida</taxon>
        <taxon>eudicotyledons</taxon>
        <taxon>Gunneridae</taxon>
        <taxon>Pentapetalae</taxon>
        <taxon>rosids</taxon>
        <taxon>malvids</taxon>
        <taxon>Brassicales</taxon>
        <taxon>Caricaceae</taxon>
        <taxon>Carica</taxon>
    </lineage>
</organism>
<reference key="1">
    <citation type="journal article" date="2008" name="Nature">
        <title>The draft genome of the transgenic tropical fruit tree papaya (Carica papaya Linnaeus).</title>
        <authorList>
            <person name="Ming R."/>
            <person name="Hou S."/>
            <person name="Feng Y."/>
            <person name="Yu Q."/>
            <person name="Dionne-Laporte A."/>
            <person name="Saw J.H."/>
            <person name="Senin P."/>
            <person name="Wang W."/>
            <person name="Ly B.V."/>
            <person name="Lewis K.L."/>
            <person name="Salzberg S.L."/>
            <person name="Feng L."/>
            <person name="Jones M.R."/>
            <person name="Skelton R.L."/>
            <person name="Murray J.E."/>
            <person name="Chen C."/>
            <person name="Qian W."/>
            <person name="Shen J."/>
            <person name="Du P."/>
            <person name="Eustice M."/>
            <person name="Tong E."/>
            <person name="Tang H."/>
            <person name="Lyons E."/>
            <person name="Paull R.E."/>
            <person name="Michael T.P."/>
            <person name="Wall K."/>
            <person name="Rice D.W."/>
            <person name="Albert H."/>
            <person name="Wang M.L."/>
            <person name="Zhu Y.J."/>
            <person name="Schatz M."/>
            <person name="Nagarajan N."/>
            <person name="Acob R.A."/>
            <person name="Guan P."/>
            <person name="Blas A."/>
            <person name="Wai C.M."/>
            <person name="Ackerman C.M."/>
            <person name="Ren Y."/>
            <person name="Liu C."/>
            <person name="Wang J."/>
            <person name="Wang J."/>
            <person name="Na J.K."/>
            <person name="Shakirov E.V."/>
            <person name="Haas B."/>
            <person name="Thimmapuram J."/>
            <person name="Nelson D."/>
            <person name="Wang X."/>
            <person name="Bowers J.E."/>
            <person name="Gschwend A.R."/>
            <person name="Delcher A.L."/>
            <person name="Singh R."/>
            <person name="Suzuki J.Y."/>
            <person name="Tripathi S."/>
            <person name="Neupane K."/>
            <person name="Wei H."/>
            <person name="Irikura B."/>
            <person name="Paidi M."/>
            <person name="Jiang N."/>
            <person name="Zhang W."/>
            <person name="Presting G."/>
            <person name="Windsor A."/>
            <person name="Navajas-Perez R."/>
            <person name="Torres M.J."/>
            <person name="Feltus F.A."/>
            <person name="Porter B."/>
            <person name="Li Y."/>
            <person name="Burroughs A.M."/>
            <person name="Luo M.C."/>
            <person name="Liu L."/>
            <person name="Christopher D.A."/>
            <person name="Mount S.M."/>
            <person name="Moore P.H."/>
            <person name="Sugimura T."/>
            <person name="Jiang J."/>
            <person name="Schuler M.A."/>
            <person name="Friedman V."/>
            <person name="Mitchell-Olds T."/>
            <person name="Shippen D.E."/>
            <person name="dePamphilis C.W."/>
            <person name="Palmer J.D."/>
            <person name="Freeling M."/>
            <person name="Paterson A.H."/>
            <person name="Gonsalves D."/>
            <person name="Wang L."/>
            <person name="Alam M."/>
        </authorList>
    </citation>
    <scope>NUCLEOTIDE SEQUENCE [LARGE SCALE GENOMIC DNA]</scope>
    <source>
        <strain>cv. SunUp</strain>
    </source>
</reference>
<keyword id="KW-0066">ATP synthesis</keyword>
<keyword id="KW-0138">CF(0)</keyword>
<keyword id="KW-0150">Chloroplast</keyword>
<keyword id="KW-0375">Hydrogen ion transport</keyword>
<keyword id="KW-0406">Ion transport</keyword>
<keyword id="KW-0472">Membrane</keyword>
<keyword id="KW-0934">Plastid</keyword>
<keyword id="KW-0793">Thylakoid</keyword>
<keyword id="KW-0812">Transmembrane</keyword>
<keyword id="KW-1133">Transmembrane helix</keyword>
<keyword id="KW-0813">Transport</keyword>
<dbReference type="EMBL" id="EU431223">
    <property type="protein sequence ID" value="ABY86768.1"/>
    <property type="molecule type" value="Genomic_DNA"/>
</dbReference>
<dbReference type="RefSeq" id="YP_001671669.1">
    <property type="nucleotide sequence ID" value="NC_010323.1"/>
</dbReference>
<dbReference type="SMR" id="B1A921"/>
<dbReference type="GeneID" id="5878397"/>
<dbReference type="KEGG" id="cpap:5878397"/>
<dbReference type="OrthoDB" id="1900203at2759"/>
<dbReference type="GO" id="GO:0009535">
    <property type="term" value="C:chloroplast thylakoid membrane"/>
    <property type="evidence" value="ECO:0007669"/>
    <property type="project" value="UniProtKB-SubCell"/>
</dbReference>
<dbReference type="GO" id="GO:0045259">
    <property type="term" value="C:proton-transporting ATP synthase complex"/>
    <property type="evidence" value="ECO:0007669"/>
    <property type="project" value="UniProtKB-KW"/>
</dbReference>
<dbReference type="GO" id="GO:0046933">
    <property type="term" value="F:proton-transporting ATP synthase activity, rotational mechanism"/>
    <property type="evidence" value="ECO:0007669"/>
    <property type="project" value="UniProtKB-UniRule"/>
</dbReference>
<dbReference type="CDD" id="cd06503">
    <property type="entry name" value="ATP-synt_Fo_b"/>
    <property type="match status" value="1"/>
</dbReference>
<dbReference type="HAMAP" id="MF_01398">
    <property type="entry name" value="ATP_synth_b_bprime"/>
    <property type="match status" value="1"/>
</dbReference>
<dbReference type="InterPro" id="IPR002146">
    <property type="entry name" value="ATP_synth_b/b'su_bac/chlpt"/>
</dbReference>
<dbReference type="PANTHER" id="PTHR34264">
    <property type="entry name" value="ATP SYNTHASE SUBUNIT B, CHLOROPLASTIC"/>
    <property type="match status" value="1"/>
</dbReference>
<dbReference type="PANTHER" id="PTHR34264:SF3">
    <property type="entry name" value="ATP SYNTHASE SUBUNIT B, CHLOROPLASTIC"/>
    <property type="match status" value="1"/>
</dbReference>
<dbReference type="Pfam" id="PF00430">
    <property type="entry name" value="ATP-synt_B"/>
    <property type="match status" value="1"/>
</dbReference>
<accession>B1A921</accession>
<name>ATPF_CARPA</name>
<proteinExistence type="inferred from homology"/>
<feature type="chain" id="PRO_0000368913" description="ATP synthase subunit b, chloroplastic">
    <location>
        <begin position="1"/>
        <end position="184"/>
    </location>
</feature>
<feature type="transmembrane region" description="Helical" evidence="1">
    <location>
        <begin position="27"/>
        <end position="49"/>
    </location>
</feature>
<comment type="function">
    <text evidence="1">F(1)F(0) ATP synthase produces ATP from ADP in the presence of a proton or sodium gradient. F-type ATPases consist of two structural domains, F(1) containing the extramembraneous catalytic core and F(0) containing the membrane proton channel, linked together by a central stalk and a peripheral stalk. During catalysis, ATP synthesis in the catalytic domain of F(1) is coupled via a rotary mechanism of the central stalk subunits to proton translocation.</text>
</comment>
<comment type="function">
    <text evidence="1">Component of the F(0) channel, it forms part of the peripheral stalk, linking F(1) to F(0).</text>
</comment>
<comment type="subunit">
    <text evidence="1">F-type ATPases have 2 components, F(1) - the catalytic core - and F(0) - the membrane proton channel. F(1) has five subunits: alpha(3), beta(3), gamma(1), delta(1), epsilon(1). F(0) has four main subunits: a(1), b(1), b'(1) and c(10-14). The alpha and beta chains form an alternating ring which encloses part of the gamma chain. F(1) is attached to F(0) by a central stalk formed by the gamma and epsilon chains, while a peripheral stalk is formed by the delta, b and b' chains.</text>
</comment>
<comment type="subcellular location">
    <subcellularLocation>
        <location evidence="1">Plastid</location>
        <location evidence="1">Chloroplast thylakoid membrane</location>
        <topology evidence="1">Single-pass membrane protein</topology>
    </subcellularLocation>
</comment>
<comment type="miscellaneous">
    <text>In plastids the F-type ATPase is also known as CF(1)CF(0).</text>
</comment>
<comment type="similarity">
    <text evidence="1">Belongs to the ATPase B chain family.</text>
</comment>
<evidence type="ECO:0000255" key="1">
    <source>
        <dbReference type="HAMAP-Rule" id="MF_01398"/>
    </source>
</evidence>
<sequence>MKNVTDSFVFLGHWPSAGSFGFNTDILATNPINLSVVLGVLIFFGKGVLSDLLDNRKQRILNTIRNSEELRDGAIEQLEKARARLRKVEMEAEQFRVNGYSEIEREKWNLINSTSKTLEQLENYKNETIQFEQQRAINQVRQRVFQQALQGAIGTLNSCLSNELHLRTINANIGMFGAMKEITD</sequence>
<gene>
    <name evidence="1" type="primary">atpF</name>
</gene>